<feature type="chain" id="PRO_1000067384" description="Heme oxygenase (staphylobilin-producing)">
    <location>
        <begin position="1"/>
        <end position="108"/>
    </location>
</feature>
<feature type="domain" description="ABM" evidence="1">
    <location>
        <begin position="2"/>
        <end position="93"/>
    </location>
</feature>
<feature type="binding site" evidence="1">
    <location>
        <position position="6"/>
    </location>
    <ligand>
        <name>Fe cation</name>
        <dbReference type="ChEBI" id="CHEBI:24875"/>
    </ligand>
</feature>
<feature type="binding site" evidence="1">
    <location>
        <begin position="21"/>
        <end position="28"/>
    </location>
    <ligand>
        <name>heme</name>
        <dbReference type="ChEBI" id="CHEBI:30413"/>
    </ligand>
</feature>
<feature type="binding site" description="axial binding residue" evidence="1">
    <location>
        <position position="76"/>
    </location>
    <ligand>
        <name>heme</name>
        <dbReference type="ChEBI" id="CHEBI:30413"/>
    </ligand>
    <ligandPart>
        <name>Fe</name>
        <dbReference type="ChEBI" id="CHEBI:18248"/>
    </ligandPart>
</feature>
<feature type="site" description="Transition state stabilizer" evidence="1">
    <location>
        <position position="66"/>
    </location>
</feature>
<evidence type="ECO:0000255" key="1">
    <source>
        <dbReference type="HAMAP-Rule" id="MF_01272"/>
    </source>
</evidence>
<organism>
    <name type="scientific">Staphylococcus aureus (strain Mu3 / ATCC 700698)</name>
    <dbReference type="NCBI Taxonomy" id="418127"/>
    <lineage>
        <taxon>Bacteria</taxon>
        <taxon>Bacillati</taxon>
        <taxon>Bacillota</taxon>
        <taxon>Bacilli</taxon>
        <taxon>Bacillales</taxon>
        <taxon>Staphylococcaceae</taxon>
        <taxon>Staphylococcus</taxon>
    </lineage>
</organism>
<dbReference type="EC" id="1.14.99.48" evidence="1"/>
<dbReference type="EMBL" id="AP009324">
    <property type="protein sequence ID" value="BAF77047.1"/>
    <property type="molecule type" value="Genomic_DNA"/>
</dbReference>
<dbReference type="RefSeq" id="WP_000480603.1">
    <property type="nucleotide sequence ID" value="NC_009782.1"/>
</dbReference>
<dbReference type="SMR" id="A7WXE5"/>
<dbReference type="KEGG" id="saw:SAHV_0164"/>
<dbReference type="HOGENOM" id="CLU_141544_2_1_9"/>
<dbReference type="GO" id="GO:0005737">
    <property type="term" value="C:cytoplasm"/>
    <property type="evidence" value="ECO:0007669"/>
    <property type="project" value="UniProtKB-SubCell"/>
</dbReference>
<dbReference type="GO" id="GO:0020037">
    <property type="term" value="F:heme binding"/>
    <property type="evidence" value="ECO:0007669"/>
    <property type="project" value="UniProtKB-UniRule"/>
</dbReference>
<dbReference type="GO" id="GO:0004392">
    <property type="term" value="F:heme oxygenase (decyclizing) activity"/>
    <property type="evidence" value="ECO:0007669"/>
    <property type="project" value="UniProtKB-UniRule"/>
</dbReference>
<dbReference type="GO" id="GO:0005506">
    <property type="term" value="F:iron ion binding"/>
    <property type="evidence" value="ECO:0007669"/>
    <property type="project" value="UniProtKB-UniRule"/>
</dbReference>
<dbReference type="GO" id="GO:0042167">
    <property type="term" value="P:heme catabolic process"/>
    <property type="evidence" value="ECO:0007669"/>
    <property type="project" value="UniProtKB-UniRule"/>
</dbReference>
<dbReference type="GO" id="GO:0033212">
    <property type="term" value="P:iron import into cell"/>
    <property type="evidence" value="ECO:0007669"/>
    <property type="project" value="InterPro"/>
</dbReference>
<dbReference type="Gene3D" id="3.30.70.100">
    <property type="match status" value="1"/>
</dbReference>
<dbReference type="HAMAP" id="MF_01272">
    <property type="entry name" value="Heme_degrading_monooxygenase"/>
    <property type="match status" value="1"/>
</dbReference>
<dbReference type="InterPro" id="IPR007138">
    <property type="entry name" value="ABM_dom"/>
</dbReference>
<dbReference type="InterPro" id="IPR011008">
    <property type="entry name" value="Dimeric_a/b-barrel"/>
</dbReference>
<dbReference type="InterPro" id="IPR050404">
    <property type="entry name" value="Heme-degrading_MO"/>
</dbReference>
<dbReference type="InterPro" id="IPR023953">
    <property type="entry name" value="IsdG"/>
</dbReference>
<dbReference type="NCBIfam" id="NF009838">
    <property type="entry name" value="PRK13313.1"/>
    <property type="match status" value="1"/>
</dbReference>
<dbReference type="PANTHER" id="PTHR34474:SF4">
    <property type="entry name" value="HEME OXYGENASE (STAPHYLOBILIN-PRODUCING) 1"/>
    <property type="match status" value="1"/>
</dbReference>
<dbReference type="PANTHER" id="PTHR34474">
    <property type="entry name" value="SIGNAL TRANSDUCTION PROTEIN TRAP"/>
    <property type="match status" value="1"/>
</dbReference>
<dbReference type="Pfam" id="PF03992">
    <property type="entry name" value="ABM"/>
    <property type="match status" value="1"/>
</dbReference>
<dbReference type="SUPFAM" id="SSF54909">
    <property type="entry name" value="Dimeric alpha+beta barrel"/>
    <property type="match status" value="1"/>
</dbReference>
<dbReference type="PROSITE" id="PS51725">
    <property type="entry name" value="ABM"/>
    <property type="match status" value="1"/>
</dbReference>
<accession>A7WXE5</accession>
<protein>
    <recommendedName>
        <fullName evidence="1">Heme oxygenase (staphylobilin-producing)</fullName>
        <ecNumber evidence="1">1.14.99.48</ecNumber>
    </recommendedName>
    <alternativeName>
        <fullName evidence="1">Heme-degrading monooxygenase</fullName>
    </alternativeName>
    <alternativeName>
        <fullName evidence="1">Iron-regulated surface determinant</fullName>
    </alternativeName>
    <alternativeName>
        <fullName evidence="1">Iron-responsive surface determinant</fullName>
    </alternativeName>
</protein>
<comment type="function">
    <text evidence="1">Allows bacterial pathogens to use the host heme as an iron source. Catalyzes the oxidative degradation of the heme macrocyclic porphyrin ring to the oxo-bilirubin chromophore staphylobilin (a mixture of the linear tetrapyrroles 5-oxo-delta-bilirubin and 15-oxo-beta-bilirubin) in the presence of a suitable electron donor such as ascorbate or NADPH--cytochrome P450 reductase, with subsequent release of free iron.</text>
</comment>
<comment type="catalytic activity">
    <reaction evidence="1">
        <text>heme b + 5 AH2 + 4 O2 + 2 H(+) = delta-staphylobilin + Fe(2+) + formaldehyde + 5 A + 4 H2O</text>
        <dbReference type="Rhea" id="RHEA:37039"/>
        <dbReference type="ChEBI" id="CHEBI:13193"/>
        <dbReference type="ChEBI" id="CHEBI:15377"/>
        <dbReference type="ChEBI" id="CHEBI:15378"/>
        <dbReference type="ChEBI" id="CHEBI:15379"/>
        <dbReference type="ChEBI" id="CHEBI:16842"/>
        <dbReference type="ChEBI" id="CHEBI:17499"/>
        <dbReference type="ChEBI" id="CHEBI:29033"/>
        <dbReference type="ChEBI" id="CHEBI:60344"/>
        <dbReference type="ChEBI" id="CHEBI:74361"/>
        <dbReference type="EC" id="1.14.99.48"/>
    </reaction>
</comment>
<comment type="catalytic activity">
    <reaction evidence="1">
        <text>heme b + 5 AH2 + 4 O2 + 2 H(+) = beta-staphylobilin + Fe(2+) + formaldehyde + 5 A + 4 H2O</text>
        <dbReference type="Rhea" id="RHEA:37363"/>
        <dbReference type="ChEBI" id="CHEBI:13193"/>
        <dbReference type="ChEBI" id="CHEBI:15377"/>
        <dbReference type="ChEBI" id="CHEBI:15378"/>
        <dbReference type="ChEBI" id="CHEBI:15379"/>
        <dbReference type="ChEBI" id="CHEBI:16842"/>
        <dbReference type="ChEBI" id="CHEBI:17499"/>
        <dbReference type="ChEBI" id="CHEBI:29033"/>
        <dbReference type="ChEBI" id="CHEBI:60344"/>
        <dbReference type="ChEBI" id="CHEBI:74362"/>
        <dbReference type="EC" id="1.14.99.48"/>
    </reaction>
</comment>
<comment type="subunit">
    <text evidence="1">Homodimer.</text>
</comment>
<comment type="subcellular location">
    <subcellularLocation>
        <location evidence="1">Cytoplasm</location>
    </subcellularLocation>
</comment>
<comment type="similarity">
    <text evidence="1">Belongs to the antibiotic biosynthesis monooxygenase family. Heme-degrading monooxygenase IsdG subfamily.</text>
</comment>
<reference key="1">
    <citation type="journal article" date="2008" name="Antimicrob. Agents Chemother.">
        <title>Mutated response regulator graR is responsible for phenotypic conversion of Staphylococcus aureus from heterogeneous vancomycin-intermediate resistance to vancomycin-intermediate resistance.</title>
        <authorList>
            <person name="Neoh H.-M."/>
            <person name="Cui L."/>
            <person name="Yuzawa H."/>
            <person name="Takeuchi F."/>
            <person name="Matsuo M."/>
            <person name="Hiramatsu K."/>
        </authorList>
    </citation>
    <scope>NUCLEOTIDE SEQUENCE [LARGE SCALE GENOMIC DNA]</scope>
    <source>
        <strain>Mu3 / ATCC 700698</strain>
    </source>
</reference>
<sequence>MFMAENRLQLQKGSAEETIERFYNRQGIETIEGFQQMFVTKTLNTEDTDEVKILTIWESEDSFNNWLNSDVFKEAHKNVRLKSDDDGQQSPILSNKVFKYDIGYHYQK</sequence>
<proteinExistence type="inferred from homology"/>
<name>HDOX_STAA1</name>
<gene>
    <name type="primary">isdI</name>
    <name type="ordered locus">SAHV_0164</name>
</gene>
<keyword id="KW-0963">Cytoplasm</keyword>
<keyword id="KW-0349">Heme</keyword>
<keyword id="KW-0408">Iron</keyword>
<keyword id="KW-0479">Metal-binding</keyword>
<keyword id="KW-0503">Monooxygenase</keyword>
<keyword id="KW-0560">Oxidoreductase</keyword>